<gene>
    <name type="primary">his5</name>
    <name type="ORF">SPBC21H7.07c</name>
</gene>
<evidence type="ECO:0000269" key="1">
    <source>
    </source>
</evidence>
<evidence type="ECO:0000305" key="2"/>
<organism>
    <name type="scientific">Schizosaccharomyces pombe (strain 972 / ATCC 24843)</name>
    <name type="common">Fission yeast</name>
    <dbReference type="NCBI Taxonomy" id="284812"/>
    <lineage>
        <taxon>Eukaryota</taxon>
        <taxon>Fungi</taxon>
        <taxon>Dikarya</taxon>
        <taxon>Ascomycota</taxon>
        <taxon>Taphrinomycotina</taxon>
        <taxon>Schizosaccharomycetes</taxon>
        <taxon>Schizosaccharomycetales</taxon>
        <taxon>Schizosaccharomycetaceae</taxon>
        <taxon>Schizosaccharomyces</taxon>
    </lineage>
</organism>
<name>HIS7_SCHPO</name>
<reference key="1">
    <citation type="journal article" date="1995" name="Yeast">
        <title>Characterization of Schizosaccharomyces pombe his1 and his5 cDNAs.</title>
        <authorList>
            <person name="Erickson F.L."/>
            <person name="Hannig E.M."/>
        </authorList>
    </citation>
    <scope>NUCLEOTIDE SEQUENCE [MRNA]</scope>
</reference>
<reference key="2">
    <citation type="journal article" date="1999" name="Yeast">
        <title>DNA sequencing and analysis of a 67.4 kb region from the right arm of Schizosaccharomyces pombe chromosome II reveals 28 open reading frames including the genes his5, pol5, ppa2, rip1, rpb8 and skb1.</title>
        <authorList>
            <person name="Xiang Z."/>
            <person name="Lyne M.H."/>
            <person name="Wood V."/>
            <person name="Rajandream M.A."/>
            <person name="Barrell B.G."/>
            <person name="Aves S.J."/>
        </authorList>
    </citation>
    <scope>NUCLEOTIDE SEQUENCE [GENOMIC DNA]</scope>
</reference>
<reference key="3">
    <citation type="journal article" date="2002" name="Nature">
        <title>The genome sequence of Schizosaccharomyces pombe.</title>
        <authorList>
            <person name="Wood V."/>
            <person name="Gwilliam R."/>
            <person name="Rajandream M.A."/>
            <person name="Lyne M.H."/>
            <person name="Lyne R."/>
            <person name="Stewart A."/>
            <person name="Sgouros J.G."/>
            <person name="Peat N."/>
            <person name="Hayles J."/>
            <person name="Baker S.G."/>
            <person name="Basham D."/>
            <person name="Bowman S."/>
            <person name="Brooks K."/>
            <person name="Brown D."/>
            <person name="Brown S."/>
            <person name="Chillingworth T."/>
            <person name="Churcher C.M."/>
            <person name="Collins M."/>
            <person name="Connor R."/>
            <person name="Cronin A."/>
            <person name="Davis P."/>
            <person name="Feltwell T."/>
            <person name="Fraser A."/>
            <person name="Gentles S."/>
            <person name="Goble A."/>
            <person name="Hamlin N."/>
            <person name="Harris D.E."/>
            <person name="Hidalgo J."/>
            <person name="Hodgson G."/>
            <person name="Holroyd S."/>
            <person name="Hornsby T."/>
            <person name="Howarth S."/>
            <person name="Huckle E.J."/>
            <person name="Hunt S."/>
            <person name="Jagels K."/>
            <person name="James K.D."/>
            <person name="Jones L."/>
            <person name="Jones M."/>
            <person name="Leather S."/>
            <person name="McDonald S."/>
            <person name="McLean J."/>
            <person name="Mooney P."/>
            <person name="Moule S."/>
            <person name="Mungall K.L."/>
            <person name="Murphy L.D."/>
            <person name="Niblett D."/>
            <person name="Odell C."/>
            <person name="Oliver K."/>
            <person name="O'Neil S."/>
            <person name="Pearson D."/>
            <person name="Quail M.A."/>
            <person name="Rabbinowitsch E."/>
            <person name="Rutherford K.M."/>
            <person name="Rutter S."/>
            <person name="Saunders D."/>
            <person name="Seeger K."/>
            <person name="Sharp S."/>
            <person name="Skelton J."/>
            <person name="Simmonds M.N."/>
            <person name="Squares R."/>
            <person name="Squares S."/>
            <person name="Stevens K."/>
            <person name="Taylor K."/>
            <person name="Taylor R.G."/>
            <person name="Tivey A."/>
            <person name="Walsh S.V."/>
            <person name="Warren T."/>
            <person name="Whitehead S."/>
            <person name="Woodward J.R."/>
            <person name="Volckaert G."/>
            <person name="Aert R."/>
            <person name="Robben J."/>
            <person name="Grymonprez B."/>
            <person name="Weltjens I."/>
            <person name="Vanstreels E."/>
            <person name="Rieger M."/>
            <person name="Schaefer M."/>
            <person name="Mueller-Auer S."/>
            <person name="Gabel C."/>
            <person name="Fuchs M."/>
            <person name="Duesterhoeft A."/>
            <person name="Fritzc C."/>
            <person name="Holzer E."/>
            <person name="Moestl D."/>
            <person name="Hilbert H."/>
            <person name="Borzym K."/>
            <person name="Langer I."/>
            <person name="Beck A."/>
            <person name="Lehrach H."/>
            <person name="Reinhardt R."/>
            <person name="Pohl T.M."/>
            <person name="Eger P."/>
            <person name="Zimmermann W."/>
            <person name="Wedler H."/>
            <person name="Wambutt R."/>
            <person name="Purnelle B."/>
            <person name="Goffeau A."/>
            <person name="Cadieu E."/>
            <person name="Dreano S."/>
            <person name="Gloux S."/>
            <person name="Lelaure V."/>
            <person name="Mottier S."/>
            <person name="Galibert F."/>
            <person name="Aves S.J."/>
            <person name="Xiang Z."/>
            <person name="Hunt C."/>
            <person name="Moore K."/>
            <person name="Hurst S.M."/>
            <person name="Lucas M."/>
            <person name="Rochet M."/>
            <person name="Gaillardin C."/>
            <person name="Tallada V.A."/>
            <person name="Garzon A."/>
            <person name="Thode G."/>
            <person name="Daga R.R."/>
            <person name="Cruzado L."/>
            <person name="Jimenez J."/>
            <person name="Sanchez M."/>
            <person name="del Rey F."/>
            <person name="Benito J."/>
            <person name="Dominguez A."/>
            <person name="Revuelta J.L."/>
            <person name="Moreno S."/>
            <person name="Armstrong J."/>
            <person name="Forsburg S.L."/>
            <person name="Cerutti L."/>
            <person name="Lowe T."/>
            <person name="McCombie W.R."/>
            <person name="Paulsen I."/>
            <person name="Potashkin J."/>
            <person name="Shpakovski G.V."/>
            <person name="Ussery D."/>
            <person name="Barrell B.G."/>
            <person name="Nurse P."/>
        </authorList>
    </citation>
    <scope>NUCLEOTIDE SEQUENCE [LARGE SCALE GENOMIC DNA]</scope>
    <source>
        <strain>972 / ATCC 24843</strain>
    </source>
</reference>
<reference key="4">
    <citation type="journal article" date="2008" name="J. Proteome Res.">
        <title>Phosphoproteome analysis of fission yeast.</title>
        <authorList>
            <person name="Wilson-Grady J.T."/>
            <person name="Villen J."/>
            <person name="Gygi S.P."/>
        </authorList>
    </citation>
    <scope>PHOSPHORYLATION [LARGE SCALE ANALYSIS] AT SER-211</scope>
    <scope>IDENTIFICATION BY MASS SPECTROMETRY</scope>
</reference>
<protein>
    <recommendedName>
        <fullName>Imidazoleglycerol-phosphate dehydratase</fullName>
        <shortName>IGPD</shortName>
        <ecNumber>4.2.1.19</ecNumber>
    </recommendedName>
</protein>
<proteinExistence type="evidence at protein level"/>
<sequence length="216" mass="23520">MRRAFVERNTNETKISVAIALDKAPLPEESNFIDELITSKHANQKGEQVIQVDTGIGFLDHMYHALAKHAGWSLRLYSRGDLIIDDHHTAEDTAIALGIAFKQAMGNFAGVKRFGHAYCPLDEALSRSVVDLSGRPYAVIDLGLKREKVGELSCEMIPHLLYSFSVAAGITLHVTCLYGSNDHHRAESAFKSLAVAMRAATSLTGSSEVPSTKGVL</sequence>
<keyword id="KW-0028">Amino-acid biosynthesis</keyword>
<keyword id="KW-0368">Histidine biosynthesis</keyword>
<keyword id="KW-0456">Lyase</keyword>
<keyword id="KW-0597">Phosphoprotein</keyword>
<keyword id="KW-1185">Reference proteome</keyword>
<feature type="chain" id="PRO_0000158247" description="Imidazoleglycerol-phosphate dehydratase">
    <location>
        <begin position="1"/>
        <end position="216"/>
    </location>
</feature>
<feature type="modified residue" description="Phosphoserine" evidence="1">
    <location>
        <position position="211"/>
    </location>
</feature>
<comment type="catalytic activity">
    <reaction>
        <text>D-erythro-1-(imidazol-4-yl)glycerol 3-phosphate = 3-(imidazol-4-yl)-2-oxopropyl phosphate + H2O</text>
        <dbReference type="Rhea" id="RHEA:11040"/>
        <dbReference type="ChEBI" id="CHEBI:15377"/>
        <dbReference type="ChEBI" id="CHEBI:57766"/>
        <dbReference type="ChEBI" id="CHEBI:58278"/>
        <dbReference type="EC" id="4.2.1.19"/>
    </reaction>
</comment>
<comment type="pathway">
    <text>Amino-acid biosynthesis; L-histidine biosynthesis; L-histidine from 5-phospho-alpha-D-ribose 1-diphosphate: step 6/9.</text>
</comment>
<comment type="similarity">
    <text evidence="2">Belongs to the imidazoleglycerol-phosphate dehydratase family.</text>
</comment>
<accession>P40374</accession>
<dbReference type="EC" id="4.2.1.19"/>
<dbReference type="EMBL" id="U07831">
    <property type="protein sequence ID" value="AAA92791.1"/>
    <property type="molecule type" value="mRNA"/>
</dbReference>
<dbReference type="EMBL" id="CU329671">
    <property type="protein sequence ID" value="CAA18867.1"/>
    <property type="molecule type" value="Genomic_DNA"/>
</dbReference>
<dbReference type="PIR" id="S55077">
    <property type="entry name" value="S55077"/>
</dbReference>
<dbReference type="RefSeq" id="NP_595932.1">
    <property type="nucleotide sequence ID" value="NM_001021840.2"/>
</dbReference>
<dbReference type="SMR" id="P40374"/>
<dbReference type="BioGRID" id="277200">
    <property type="interactions" value="11"/>
</dbReference>
<dbReference type="FunCoup" id="P40374">
    <property type="interactions" value="111"/>
</dbReference>
<dbReference type="STRING" id="284812.P40374"/>
<dbReference type="iPTMnet" id="P40374"/>
<dbReference type="PaxDb" id="4896-SPBC21H7.07c.1"/>
<dbReference type="EnsemblFungi" id="SPBC21H7.07c.1">
    <property type="protein sequence ID" value="SPBC21H7.07c.1:pep"/>
    <property type="gene ID" value="SPBC21H7.07c"/>
</dbReference>
<dbReference type="GeneID" id="2540675"/>
<dbReference type="KEGG" id="spo:2540675"/>
<dbReference type="PomBase" id="SPBC21H7.07c">
    <property type="gene designation" value="his5"/>
</dbReference>
<dbReference type="VEuPathDB" id="FungiDB:SPBC21H7.07c"/>
<dbReference type="eggNOG" id="KOG3143">
    <property type="taxonomic scope" value="Eukaryota"/>
</dbReference>
<dbReference type="HOGENOM" id="CLU_044308_3_0_1"/>
<dbReference type="InParanoid" id="P40374"/>
<dbReference type="OMA" id="GIPFFDH"/>
<dbReference type="PhylomeDB" id="P40374"/>
<dbReference type="UniPathway" id="UPA00031">
    <property type="reaction ID" value="UER00011"/>
</dbReference>
<dbReference type="PRO" id="PR:P40374"/>
<dbReference type="Proteomes" id="UP000002485">
    <property type="component" value="Chromosome II"/>
</dbReference>
<dbReference type="GO" id="GO:0005829">
    <property type="term" value="C:cytosol"/>
    <property type="evidence" value="ECO:0007005"/>
    <property type="project" value="PomBase"/>
</dbReference>
<dbReference type="GO" id="GO:0005634">
    <property type="term" value="C:nucleus"/>
    <property type="evidence" value="ECO:0007005"/>
    <property type="project" value="PomBase"/>
</dbReference>
<dbReference type="GO" id="GO:0004424">
    <property type="term" value="F:imidazoleglycerol-phosphate dehydratase activity"/>
    <property type="evidence" value="ECO:0000318"/>
    <property type="project" value="GO_Central"/>
</dbReference>
<dbReference type="GO" id="GO:0000105">
    <property type="term" value="P:L-histidine biosynthetic process"/>
    <property type="evidence" value="ECO:0000318"/>
    <property type="project" value="GO_Central"/>
</dbReference>
<dbReference type="CDD" id="cd07914">
    <property type="entry name" value="IGPD"/>
    <property type="match status" value="1"/>
</dbReference>
<dbReference type="FunFam" id="3.30.230.40:FF:000004">
    <property type="entry name" value="Imidazoleglycerol-phosphate dehydratase"/>
    <property type="match status" value="1"/>
</dbReference>
<dbReference type="FunFam" id="3.30.230.40:FF:000001">
    <property type="entry name" value="Imidazoleglycerol-phosphate dehydratase HisB"/>
    <property type="match status" value="1"/>
</dbReference>
<dbReference type="Gene3D" id="3.30.230.40">
    <property type="entry name" value="Imidazole glycerol phosphate dehydratase, domain 1"/>
    <property type="match status" value="2"/>
</dbReference>
<dbReference type="HAMAP" id="MF_00076">
    <property type="entry name" value="HisB"/>
    <property type="match status" value="1"/>
</dbReference>
<dbReference type="InterPro" id="IPR038494">
    <property type="entry name" value="IGPD_sf"/>
</dbReference>
<dbReference type="InterPro" id="IPR000807">
    <property type="entry name" value="ImidazoleglycerolP_deHydtase"/>
</dbReference>
<dbReference type="InterPro" id="IPR020565">
    <property type="entry name" value="ImidazoleglycerP_deHydtase_CS"/>
</dbReference>
<dbReference type="InterPro" id="IPR020568">
    <property type="entry name" value="Ribosomal_Su5_D2-typ_SF"/>
</dbReference>
<dbReference type="PANTHER" id="PTHR23133:SF2">
    <property type="entry name" value="IMIDAZOLEGLYCEROL-PHOSPHATE DEHYDRATASE"/>
    <property type="match status" value="1"/>
</dbReference>
<dbReference type="PANTHER" id="PTHR23133">
    <property type="entry name" value="IMIDAZOLEGLYCEROL-PHOSPHATE DEHYDRATASE HIS7"/>
    <property type="match status" value="1"/>
</dbReference>
<dbReference type="Pfam" id="PF00475">
    <property type="entry name" value="IGPD"/>
    <property type="match status" value="1"/>
</dbReference>
<dbReference type="SUPFAM" id="SSF54211">
    <property type="entry name" value="Ribosomal protein S5 domain 2-like"/>
    <property type="match status" value="2"/>
</dbReference>
<dbReference type="PROSITE" id="PS00954">
    <property type="entry name" value="IGP_DEHYDRATASE_1"/>
    <property type="match status" value="1"/>
</dbReference>
<dbReference type="PROSITE" id="PS00955">
    <property type="entry name" value="IGP_DEHYDRATASE_2"/>
    <property type="match status" value="1"/>
</dbReference>